<evidence type="ECO:0000250" key="1">
    <source>
        <dbReference type="UniProtKB" id="Q6TCH7"/>
    </source>
</evidence>
<evidence type="ECO:0000255" key="2"/>
<evidence type="ECO:0000269" key="3">
    <source>
    </source>
</evidence>
<evidence type="ECO:0000269" key="4">
    <source>
    </source>
</evidence>
<evidence type="ECO:0000269" key="5">
    <source>
    </source>
</evidence>
<evidence type="ECO:0000269" key="6">
    <source>
    </source>
</evidence>
<evidence type="ECO:0000303" key="7">
    <source>
    </source>
</evidence>
<evidence type="ECO:0000303" key="8">
    <source>
    </source>
</evidence>
<evidence type="ECO:0000305" key="9"/>
<evidence type="ECO:0000312" key="10">
    <source>
        <dbReference type="MGI" id="MGI:2679683"/>
    </source>
</evidence>
<feature type="chain" id="PRO_0000218847" description="Progestin and adipoQ receptor family member 3">
    <location>
        <begin position="1"/>
        <end position="311"/>
    </location>
</feature>
<feature type="topological domain" description="Cytoplasmic" evidence="2">
    <location>
        <begin position="1"/>
        <end position="70"/>
    </location>
</feature>
<feature type="transmembrane region" description="Helical" evidence="2">
    <location>
        <begin position="71"/>
        <end position="91"/>
    </location>
</feature>
<feature type="topological domain" description="Lumenal" evidence="2">
    <location>
        <begin position="92"/>
        <end position="104"/>
    </location>
</feature>
<feature type="transmembrane region" description="Helical" evidence="2">
    <location>
        <begin position="105"/>
        <end position="125"/>
    </location>
</feature>
<feature type="topological domain" description="Cytoplasmic" evidence="2">
    <location>
        <begin position="126"/>
        <end position="145"/>
    </location>
</feature>
<feature type="transmembrane region" description="Helical" evidence="2">
    <location>
        <begin position="146"/>
        <end position="166"/>
    </location>
</feature>
<feature type="topological domain" description="Lumenal" evidence="2">
    <location>
        <begin position="167"/>
        <end position="172"/>
    </location>
</feature>
<feature type="transmembrane region" description="Helical" evidence="2">
    <location>
        <begin position="173"/>
        <end position="193"/>
    </location>
</feature>
<feature type="topological domain" description="Cytoplasmic" evidence="2">
    <location>
        <begin position="194"/>
        <end position="203"/>
    </location>
</feature>
<feature type="transmembrane region" description="Helical" evidence="2">
    <location>
        <begin position="204"/>
        <end position="224"/>
    </location>
</feature>
<feature type="topological domain" description="Lumenal" evidence="2">
    <location>
        <begin position="225"/>
        <end position="235"/>
    </location>
</feature>
<feature type="transmembrane region" description="Helical" evidence="2">
    <location>
        <begin position="236"/>
        <end position="256"/>
    </location>
</feature>
<feature type="topological domain" description="Cytoplasmic" evidence="2">
    <location>
        <begin position="257"/>
        <end position="275"/>
    </location>
</feature>
<feature type="transmembrane region" description="Helical" evidence="2">
    <location>
        <begin position="276"/>
        <end position="296"/>
    </location>
</feature>
<feature type="topological domain" description="Lumenal" evidence="2">
    <location>
        <begin position="297"/>
        <end position="311"/>
    </location>
</feature>
<feature type="region of interest" description="Required for interaction with SREBF2" evidence="1">
    <location>
        <begin position="1"/>
        <end position="20"/>
    </location>
</feature>
<feature type="region of interest" description="Required for interaction with SCAP" evidence="1">
    <location>
        <begin position="41"/>
        <end position="60"/>
    </location>
</feature>
<feature type="region of interest" description="Golgi targeting" evidence="1">
    <location>
        <begin position="61"/>
        <end position="71"/>
    </location>
</feature>
<feature type="region of interest" description="Golgi targeting" evidence="1">
    <location>
        <begin position="299"/>
        <end position="303"/>
    </location>
</feature>
<proteinExistence type="evidence at protein level"/>
<name>PAQR3_MOUSE</name>
<protein>
    <recommendedName>
        <fullName evidence="7">Progestin and adipoQ receptor family member 3</fullName>
    </recommendedName>
    <alternativeName>
        <fullName>Progestin and adipoQ receptor family member III</fullName>
    </alternativeName>
    <alternativeName>
        <fullName evidence="8">Raf kinase trapping to Golgi</fullName>
        <shortName evidence="8">RKTG</shortName>
    </alternativeName>
</protein>
<dbReference type="EMBL" id="AY424292">
    <property type="protein sequence ID" value="AAR08380.1"/>
    <property type="molecule type" value="mRNA"/>
</dbReference>
<dbReference type="CCDS" id="CCDS19451.1"/>
<dbReference type="RefSeq" id="NP_001346839.1">
    <property type="nucleotide sequence ID" value="NM_001359910.2"/>
</dbReference>
<dbReference type="RefSeq" id="NP_001415700.1">
    <property type="nucleotide sequence ID" value="NM_001428771.1"/>
</dbReference>
<dbReference type="RefSeq" id="NP_001415701.1">
    <property type="nucleotide sequence ID" value="NM_001428772.1"/>
</dbReference>
<dbReference type="RefSeq" id="NP_940814.1">
    <property type="nucleotide sequence ID" value="NM_198422.4"/>
</dbReference>
<dbReference type="RefSeq" id="XP_006534937.1">
    <property type="nucleotide sequence ID" value="XM_006534874.3"/>
</dbReference>
<dbReference type="RefSeq" id="XP_006534938.1">
    <property type="nucleotide sequence ID" value="XM_006534875.3"/>
</dbReference>
<dbReference type="SMR" id="Q6TCG8"/>
<dbReference type="BioGRID" id="231126">
    <property type="interactions" value="1"/>
</dbReference>
<dbReference type="FunCoup" id="Q6TCG8">
    <property type="interactions" value="1085"/>
</dbReference>
<dbReference type="STRING" id="10090.ENSMUSP00000108593"/>
<dbReference type="iPTMnet" id="Q6TCG8"/>
<dbReference type="PhosphoSitePlus" id="Q6TCG8"/>
<dbReference type="PaxDb" id="10090-ENSMUSP00000108593"/>
<dbReference type="ProteomicsDB" id="294008"/>
<dbReference type="Antibodypedia" id="55228">
    <property type="antibodies" value="52 antibodies from 10 providers"/>
</dbReference>
<dbReference type="DNASU" id="231474"/>
<dbReference type="Ensembl" id="ENSMUST00000069453.9">
    <property type="protein sequence ID" value="ENSMUSP00000069324.3"/>
    <property type="gene ID" value="ENSMUSG00000055725.12"/>
</dbReference>
<dbReference type="Ensembl" id="ENSMUST00000112969.10">
    <property type="protein sequence ID" value="ENSMUSP00000108593.4"/>
    <property type="gene ID" value="ENSMUSG00000055725.12"/>
</dbReference>
<dbReference type="GeneID" id="231474"/>
<dbReference type="KEGG" id="mmu:231474"/>
<dbReference type="UCSC" id="uc008yfq.1">
    <property type="organism name" value="mouse"/>
</dbReference>
<dbReference type="AGR" id="MGI:2679683"/>
<dbReference type="CTD" id="152559"/>
<dbReference type="MGI" id="MGI:2679683">
    <property type="gene designation" value="Paqr3"/>
</dbReference>
<dbReference type="VEuPathDB" id="HostDB:ENSMUSG00000055725"/>
<dbReference type="eggNOG" id="KOG0748">
    <property type="taxonomic scope" value="Eukaryota"/>
</dbReference>
<dbReference type="GeneTree" id="ENSGT00940000155291"/>
<dbReference type="InParanoid" id="Q6TCG8"/>
<dbReference type="OMA" id="HSQPCPD"/>
<dbReference type="OrthoDB" id="529367at2759"/>
<dbReference type="PhylomeDB" id="Q6TCG8"/>
<dbReference type="TreeFam" id="TF313640"/>
<dbReference type="Reactome" id="R-MMU-5675221">
    <property type="pathway name" value="Negative regulation of MAPK pathway"/>
</dbReference>
<dbReference type="BioGRID-ORCS" id="231474">
    <property type="hits" value="2 hits in 81 CRISPR screens"/>
</dbReference>
<dbReference type="ChiTaRS" id="Paqr3">
    <property type="organism name" value="mouse"/>
</dbReference>
<dbReference type="PRO" id="PR:Q6TCG8"/>
<dbReference type="Proteomes" id="UP000000589">
    <property type="component" value="Chromosome 5"/>
</dbReference>
<dbReference type="RNAct" id="Q6TCG8">
    <property type="molecule type" value="protein"/>
</dbReference>
<dbReference type="Bgee" id="ENSMUSG00000055725">
    <property type="expression patterns" value="Expressed in embryonic brain and 63 other cell types or tissues"/>
</dbReference>
<dbReference type="ExpressionAtlas" id="Q6TCG8">
    <property type="expression patterns" value="baseline and differential"/>
</dbReference>
<dbReference type="GO" id="GO:0005794">
    <property type="term" value="C:Golgi apparatus"/>
    <property type="evidence" value="ECO:0000266"/>
    <property type="project" value="MGI"/>
</dbReference>
<dbReference type="GO" id="GO:0000139">
    <property type="term" value="C:Golgi membrane"/>
    <property type="evidence" value="ECO:0007669"/>
    <property type="project" value="UniProtKB-SubCell"/>
</dbReference>
<dbReference type="GO" id="GO:0043495">
    <property type="term" value="F:protein-membrane adaptor activity"/>
    <property type="evidence" value="ECO:0007669"/>
    <property type="project" value="Ensembl"/>
</dbReference>
<dbReference type="GO" id="GO:1990756">
    <property type="term" value="F:ubiquitin-like ligase-substrate adaptor activity"/>
    <property type="evidence" value="ECO:0000314"/>
    <property type="project" value="UniProtKB"/>
</dbReference>
<dbReference type="GO" id="GO:0010977">
    <property type="term" value="P:negative regulation of neuron projection development"/>
    <property type="evidence" value="ECO:0000266"/>
    <property type="project" value="MGI"/>
</dbReference>
<dbReference type="GO" id="GO:0035359">
    <property type="term" value="P:negative regulation of peroxisome proliferator activated receptor signaling pathway"/>
    <property type="evidence" value="ECO:0000314"/>
    <property type="project" value="UniProtKB"/>
</dbReference>
<dbReference type="GO" id="GO:0045542">
    <property type="term" value="P:positive regulation of cholesterol biosynthetic process"/>
    <property type="evidence" value="ECO:0007669"/>
    <property type="project" value="Ensembl"/>
</dbReference>
<dbReference type="GO" id="GO:0032436">
    <property type="term" value="P:positive regulation of proteasomal ubiquitin-dependent protein catabolic process"/>
    <property type="evidence" value="ECO:0000314"/>
    <property type="project" value="UniProtKB"/>
</dbReference>
<dbReference type="GO" id="GO:2000640">
    <property type="term" value="P:positive regulation of SREBP signaling pathway"/>
    <property type="evidence" value="ECO:0007669"/>
    <property type="project" value="Ensembl"/>
</dbReference>
<dbReference type="GO" id="GO:0034067">
    <property type="term" value="P:protein localization to Golgi apparatus"/>
    <property type="evidence" value="ECO:0000266"/>
    <property type="project" value="MGI"/>
</dbReference>
<dbReference type="InterPro" id="IPR004254">
    <property type="entry name" value="AdipoR/HlyIII-related"/>
</dbReference>
<dbReference type="PANTHER" id="PTHR20855">
    <property type="entry name" value="ADIPOR/PROGESTIN RECEPTOR-RELATED"/>
    <property type="match status" value="1"/>
</dbReference>
<dbReference type="PANTHER" id="PTHR20855:SF15">
    <property type="entry name" value="PROGESTIN AND ADIPOQ RECEPTOR FAMILY MEMBER 3"/>
    <property type="match status" value="1"/>
</dbReference>
<dbReference type="Pfam" id="PF03006">
    <property type="entry name" value="HlyIII"/>
    <property type="match status" value="1"/>
</dbReference>
<comment type="function">
    <text evidence="3 4 5 6">Golgi-anchored protein which modulates its interactors acitivies by tethering them to the Golgi apparatus (PubMed:17724343, PubMed:26311497). Functions as a spatial regulator of RAF1 kinase by sequestrating it to the Golgi apparatus (PubMed:17724343). Acts as a positive regulator of cholesterol biosynthesis by mediating the anchoring of the SCAP:SREBP complex in the Golgi apparatus, thereby promoting SCAP:SREBF2 complex formation, potentiating SREBF2 and SREBF1 processing and enhancing lipid synthesis (PubMed:26311497). Also regulates PPARA and PPARG functions by mediating their interaction with E3 ubiquitin ligases, such as STUB1 or HUWE1, leading to their polyubiquitination and proteasome-mediated degradation (PubMed:29331071, PubMed:35710596).</text>
</comment>
<comment type="subunit">
    <text evidence="4 5 6">Interacts with SCAP and SREBF2; the interactions are direct, increase in low cholesterol conditions and tether SCAP:SREBP complex to the Golgi apparatus (PubMed:26311497). Interaction with SCAP is mutually exclusive with INSIG1 (PubMed:26311497). In hepatocytes, interacts with PPARA and HUWE1; the interactions promote PPARA poylubiquitination and HUWE1-mediated degradation (PubMed:29331071). In macrophages, interacts with PPARG and STUB1; the interactions promote PPARG poylubiquitination and STUB1-mediated degradation (PubMed:35710596).</text>
</comment>
<comment type="subcellular location">
    <subcellularLocation>
        <location evidence="3 4">Golgi apparatus membrane</location>
        <topology evidence="3">Multi-pass membrane protein</topology>
    </subcellularLocation>
</comment>
<comment type="similarity">
    <text evidence="9">Belongs to the ADIPOR family.</text>
</comment>
<gene>
    <name evidence="10" type="primary">Paqr3</name>
</gene>
<sequence>MHQKLLKSAHYIELGSYQYWPVLVPRGIRLYTYEQIPVSLKDNPYITDGYRAYLPSRLCIKSLFILSNETVNIWSHLLGFFLFFTLGIYDMTSVLPSASASREDFVICSICLFCFQVCMLCSVGYHLFSCHRSEKTCRRWMALDYAGISIGILGCYVSGVFYAFYCNNYWRQVYLITVLAMILAVFFAQIHPSYLTQQWQRLRPIIFCSVSGYGVIPTLHWVWLNGGVSAPIVQDFAPRVIVMYVIALLAFLFYISKVPERYFPGQLNYLGSSHQIWHVLAVVMLYWWHQSTVYVMQYRHSKPCPDYVSHL</sequence>
<reference key="1">
    <citation type="journal article" date="2005" name="J. Mol. Evol.">
        <title>PAQR proteins: a novel membrane receptor family defined by an ancient 7-transmembrane pass motif.</title>
        <authorList>
            <person name="Tang Y.T."/>
            <person name="Hu T."/>
            <person name="Arterburn M."/>
            <person name="Boyle B."/>
            <person name="Bright J.M."/>
            <person name="Emtage P.C."/>
            <person name="Funk W.D."/>
        </authorList>
    </citation>
    <scope>NUCLEOTIDE SEQUENCE [MRNA]</scope>
    <source>
        <strain>C57BL/6J</strain>
    </source>
</reference>
<reference key="2">
    <citation type="journal article" date="2007" name="Proc. Natl. Acad. Sci. U.S.A.">
        <title>Spatial regulation of Raf kinase signaling by RKTG.</title>
        <authorList>
            <person name="Feng L."/>
            <person name="Xie X."/>
            <person name="Ding Q."/>
            <person name="Luo X."/>
            <person name="He J."/>
            <person name="Fan F."/>
            <person name="Liu W."/>
            <person name="Wang Z."/>
            <person name="Chen Y."/>
        </authorList>
    </citation>
    <scope>FUNCTION</scope>
    <scope>SUBCELLULAR LOCATION</scope>
</reference>
<reference key="3">
    <citation type="journal article" date="2015" name="Nat. Commun.">
        <title>PAQR3 modulates cholesterol homeostasis by anchoring Scap/SREBP complex to the Golgi apparatus.</title>
        <authorList>
            <person name="Xu D."/>
            <person name="Wang Z."/>
            <person name="Zhang Y."/>
            <person name="Jiang W."/>
            <person name="Pan Y."/>
            <person name="Song B.L."/>
            <person name="Chen Y."/>
        </authorList>
    </citation>
    <scope>FUNCTION</scope>
    <scope>INTERACTION WITH SCAP AND SREBF2</scope>
    <scope>SUBCELLULAR LOCATION</scope>
</reference>
<reference key="4">
    <citation type="journal article" date="2018" name="Hepatology">
        <title>Hepatic PPARalpha function is controlled by polyubiquitination and proteasome-mediated degradation through the coordinated actions of PAQR3 and HUWE1.</title>
        <authorList>
            <person name="Zhao Z."/>
            <person name="Xu D."/>
            <person name="Wang Z."/>
            <person name="Wang L."/>
            <person name="Han R."/>
            <person name="Wang Z."/>
            <person name="Liao L."/>
            <person name="Chen Y."/>
        </authorList>
    </citation>
    <scope>FUNCTION</scope>
    <scope>INTERACTION WITH PPARA AND HUWE1</scope>
</reference>
<reference key="5">
    <citation type="journal article" date="2022" name="Lab. Invest.">
        <title>PAQR3 depletion accelerates diabetic wound healing by promoting angiogenesis through inhibiting STUB1-mediated PPARgamma degradation.</title>
        <authorList>
            <person name="Qiu J."/>
            <person name="Shu C."/>
            <person name="Li X."/>
            <person name="Zhang W.C."/>
        </authorList>
    </citation>
    <scope>FUNCTION</scope>
    <scope>INTERACTION WITH PPARG AND STUB1</scope>
</reference>
<accession>Q6TCG8</accession>
<organism>
    <name type="scientific">Mus musculus</name>
    <name type="common">Mouse</name>
    <dbReference type="NCBI Taxonomy" id="10090"/>
    <lineage>
        <taxon>Eukaryota</taxon>
        <taxon>Metazoa</taxon>
        <taxon>Chordata</taxon>
        <taxon>Craniata</taxon>
        <taxon>Vertebrata</taxon>
        <taxon>Euteleostomi</taxon>
        <taxon>Mammalia</taxon>
        <taxon>Eutheria</taxon>
        <taxon>Euarchontoglires</taxon>
        <taxon>Glires</taxon>
        <taxon>Rodentia</taxon>
        <taxon>Myomorpha</taxon>
        <taxon>Muroidea</taxon>
        <taxon>Muridae</taxon>
        <taxon>Murinae</taxon>
        <taxon>Mus</taxon>
        <taxon>Mus</taxon>
    </lineage>
</organism>
<keyword id="KW-0333">Golgi apparatus</keyword>
<keyword id="KW-0472">Membrane</keyword>
<keyword id="KW-1185">Reference proteome</keyword>
<keyword id="KW-0812">Transmembrane</keyword>
<keyword id="KW-1133">Transmembrane helix</keyword>